<reference key="1">
    <citation type="journal article" date="1992" name="Plant Mol. Biol.">
        <title>Iron induces ferritin synthesis in maize plantlets.</title>
        <authorList>
            <person name="Lobreaux S."/>
            <person name="Massenet O."/>
            <person name="Briat J.-F."/>
        </authorList>
    </citation>
    <scope>NUCLEOTIDE SEQUENCE [MRNA]</scope>
    <scope>PROTEIN SEQUENCE OF 44-72</scope>
    <source>
        <strain>cv. Missouri 17</strain>
        <tissue>Root</tissue>
        <tissue>Seed</tissue>
    </source>
</reference>
<reference key="2">
    <citation type="journal article" date="1995" name="Eur. J. Biochem.">
        <title>Structure and differential expression of two maize ferritin genes in response to iron and abscisic acid.</title>
        <authorList>
            <person name="Fobis-Loisy I."/>
            <person name="Loridon K."/>
            <person name="Lobreaux S."/>
            <person name="Lebrun M."/>
            <person name="Briat J.-F."/>
        </authorList>
    </citation>
    <scope>NUCLEOTIDE SEQUENCE [GENOMIC DNA]</scope>
    <source>
        <strain>cv. B73</strain>
        <tissue>Seedling</tissue>
    </source>
</reference>
<feature type="transit peptide" description="Chloroplast" evidence="2">
    <location>
        <begin position="1"/>
        <end position="43"/>
    </location>
</feature>
<feature type="chain" id="PRO_0000008860" description="Ferritin-2, chloroplastic">
    <location>
        <begin position="44"/>
        <end position="252"/>
    </location>
</feature>
<feature type="domain" description="Ferritin-like diiron" evidence="1">
    <location>
        <begin position="81"/>
        <end position="234"/>
    </location>
</feature>
<feature type="region of interest" description="Extension peptide (EP)">
    <location>
        <begin position="44"/>
        <end position="80"/>
    </location>
</feature>
<feature type="binding site" evidence="1">
    <location>
        <position position="98"/>
    </location>
    <ligand>
        <name>Fe cation</name>
        <dbReference type="ChEBI" id="CHEBI:24875"/>
        <label>1</label>
    </ligand>
</feature>
<feature type="binding site" evidence="1">
    <location>
        <position position="133"/>
    </location>
    <ligand>
        <name>Fe cation</name>
        <dbReference type="ChEBI" id="CHEBI:24875"/>
        <label>1</label>
    </ligand>
</feature>
<feature type="binding site" evidence="1">
    <location>
        <position position="133"/>
    </location>
    <ligand>
        <name>Fe cation</name>
        <dbReference type="ChEBI" id="CHEBI:24875"/>
        <label>2</label>
    </ligand>
</feature>
<feature type="binding site" evidence="1">
    <location>
        <position position="136"/>
    </location>
    <ligand>
        <name>Fe cation</name>
        <dbReference type="ChEBI" id="CHEBI:24875"/>
        <label>1</label>
    </ligand>
</feature>
<feature type="binding site" evidence="1">
    <location>
        <position position="182"/>
    </location>
    <ligand>
        <name>Fe cation</name>
        <dbReference type="ChEBI" id="CHEBI:24875"/>
        <label>2</label>
    </ligand>
</feature>
<feature type="binding site" evidence="1">
    <location>
        <position position="216"/>
    </location>
    <ligand>
        <name>Fe cation</name>
        <dbReference type="ChEBI" id="CHEBI:24875"/>
        <label>2</label>
    </ligand>
</feature>
<feature type="sequence conflict" description="In Ref. 2; CAA58147." evidence="3" ref="2">
    <original>G</original>
    <variation>V</variation>
    <location>
        <position position="217"/>
    </location>
</feature>
<feature type="sequence conflict" description="In Ref. 2; CAA58147." evidence="3" ref="2">
    <original>A</original>
    <variation>G</variation>
    <location>
        <position position="251"/>
    </location>
</feature>
<comment type="function">
    <text>Stores iron in a soluble, non-toxic, readily available form. Important for iron homeostasis. Has ferroxidase activity. Iron is taken up in the ferrous form and deposited as ferric hydroxides after oxidation.</text>
</comment>
<comment type="catalytic activity">
    <reaction>
        <text>4 Fe(2+) + O2 + 4 H(+) = 4 Fe(3+) + 2 H2O</text>
        <dbReference type="Rhea" id="RHEA:11148"/>
        <dbReference type="ChEBI" id="CHEBI:15377"/>
        <dbReference type="ChEBI" id="CHEBI:15378"/>
        <dbReference type="ChEBI" id="CHEBI:15379"/>
        <dbReference type="ChEBI" id="CHEBI:29033"/>
        <dbReference type="ChEBI" id="CHEBI:29034"/>
        <dbReference type="EC" id="1.16.3.1"/>
    </reaction>
</comment>
<comment type="subunit">
    <text>Oligomer of 24 subunits. There are two types of subunits: L (light) chain and H (heavy) chain. The major chain can be light or heavy, depending on the species and tissue type. The functional molecule forms a roughly spherical shell with a diameter of 12 nm and contains a central cavity into which the insoluble mineral iron core is deposited.</text>
</comment>
<comment type="subcellular location">
    <subcellularLocation>
        <location>Plastid</location>
        <location>Chloroplast</location>
    </subcellularLocation>
    <subcellularLocation>
        <location>Plastid</location>
    </subcellularLocation>
</comment>
<comment type="tissue specificity">
    <text>Ferritins accumulate in seed during maturation. Then, they are degraded during the first days of germination. Present in roots and leaves after iron treatment.</text>
</comment>
<comment type="induction">
    <text>By iron.</text>
</comment>
<comment type="similarity">
    <text evidence="3">Belongs to the ferritin family.</text>
</comment>
<comment type="sequence caution" evidence="3">
    <conflict type="erroneous initiation">
        <sequence resource="EMBL-CDS" id="CAA43664"/>
    </conflict>
</comment>
<evidence type="ECO:0000255" key="1">
    <source>
        <dbReference type="PROSITE-ProRule" id="PRU00085"/>
    </source>
</evidence>
<evidence type="ECO:0000269" key="2">
    <source>
    </source>
</evidence>
<evidence type="ECO:0000305" key="3"/>
<protein>
    <recommendedName>
        <fullName>Ferritin-2, chloroplastic</fullName>
        <ecNumber>1.16.3.1</ecNumber>
    </recommendedName>
    <alternativeName>
        <fullName>ZmFer2</fullName>
    </alternativeName>
</protein>
<keyword id="KW-0150">Chloroplast</keyword>
<keyword id="KW-0903">Direct protein sequencing</keyword>
<keyword id="KW-0408">Iron</keyword>
<keyword id="KW-0409">Iron storage</keyword>
<keyword id="KW-0479">Metal-binding</keyword>
<keyword id="KW-0560">Oxidoreductase</keyword>
<keyword id="KW-0934">Plastid</keyword>
<keyword id="KW-1185">Reference proteome</keyword>
<keyword id="KW-0809">Transit peptide</keyword>
<dbReference type="EC" id="1.16.3.1"/>
<dbReference type="EMBL" id="X61392">
    <property type="protein sequence ID" value="CAA43664.1"/>
    <property type="status" value="ALT_INIT"/>
    <property type="molecule type" value="mRNA"/>
</dbReference>
<dbReference type="EMBL" id="X83077">
    <property type="protein sequence ID" value="CAA58147.1"/>
    <property type="molecule type" value="Genomic_DNA"/>
</dbReference>
<dbReference type="PIR" id="S24057">
    <property type="entry name" value="S24057"/>
</dbReference>
<dbReference type="SMR" id="P29390"/>
<dbReference type="FunCoup" id="P29390">
    <property type="interactions" value="293"/>
</dbReference>
<dbReference type="STRING" id="4577.P29390"/>
<dbReference type="MaizeGDB" id="25278"/>
<dbReference type="InParanoid" id="P29390"/>
<dbReference type="Proteomes" id="UP000007305">
    <property type="component" value="Unplaced"/>
</dbReference>
<dbReference type="ExpressionAtlas" id="P29390">
    <property type="expression patterns" value="baseline and differential"/>
</dbReference>
<dbReference type="GO" id="GO:0009507">
    <property type="term" value="C:chloroplast"/>
    <property type="evidence" value="ECO:0007669"/>
    <property type="project" value="UniProtKB-SubCell"/>
</dbReference>
<dbReference type="GO" id="GO:0005737">
    <property type="term" value="C:cytoplasm"/>
    <property type="evidence" value="ECO:0000318"/>
    <property type="project" value="GO_Central"/>
</dbReference>
<dbReference type="GO" id="GO:0008199">
    <property type="term" value="F:ferric iron binding"/>
    <property type="evidence" value="ECO:0000318"/>
    <property type="project" value="GO_Central"/>
</dbReference>
<dbReference type="GO" id="GO:0008198">
    <property type="term" value="F:ferrous iron binding"/>
    <property type="evidence" value="ECO:0000318"/>
    <property type="project" value="GO_Central"/>
</dbReference>
<dbReference type="GO" id="GO:0004322">
    <property type="term" value="F:ferroxidase activity"/>
    <property type="evidence" value="ECO:0007669"/>
    <property type="project" value="UniProtKB-EC"/>
</dbReference>
<dbReference type="GO" id="GO:0006879">
    <property type="term" value="P:intracellular iron ion homeostasis"/>
    <property type="evidence" value="ECO:0007669"/>
    <property type="project" value="UniProtKB-KW"/>
</dbReference>
<dbReference type="GO" id="GO:0006826">
    <property type="term" value="P:iron ion transport"/>
    <property type="evidence" value="ECO:0007669"/>
    <property type="project" value="InterPro"/>
</dbReference>
<dbReference type="CDD" id="cd01056">
    <property type="entry name" value="Euk_Ferritin"/>
    <property type="match status" value="1"/>
</dbReference>
<dbReference type="FunFam" id="1.20.1260.10:FF:000006">
    <property type="entry name" value="Ferritin"/>
    <property type="match status" value="1"/>
</dbReference>
<dbReference type="Gene3D" id="1.20.1260.10">
    <property type="match status" value="1"/>
</dbReference>
<dbReference type="InterPro" id="IPR001519">
    <property type="entry name" value="Ferritin"/>
</dbReference>
<dbReference type="InterPro" id="IPR012347">
    <property type="entry name" value="Ferritin-like"/>
</dbReference>
<dbReference type="InterPro" id="IPR009040">
    <property type="entry name" value="Ferritin-like_diiron"/>
</dbReference>
<dbReference type="InterPro" id="IPR009078">
    <property type="entry name" value="Ferritin-like_SF"/>
</dbReference>
<dbReference type="InterPro" id="IPR014034">
    <property type="entry name" value="Ferritin_CS"/>
</dbReference>
<dbReference type="InterPro" id="IPR008331">
    <property type="entry name" value="Ferritin_DPS_dom"/>
</dbReference>
<dbReference type="PANTHER" id="PTHR11431">
    <property type="entry name" value="FERRITIN"/>
    <property type="match status" value="1"/>
</dbReference>
<dbReference type="PANTHER" id="PTHR11431:SF125">
    <property type="entry name" value="FERRITIN-1, CHLOROPLASTIC"/>
    <property type="match status" value="1"/>
</dbReference>
<dbReference type="Pfam" id="PF00210">
    <property type="entry name" value="Ferritin"/>
    <property type="match status" value="1"/>
</dbReference>
<dbReference type="SUPFAM" id="SSF47240">
    <property type="entry name" value="Ferritin-like"/>
    <property type="match status" value="1"/>
</dbReference>
<dbReference type="PROSITE" id="PS00540">
    <property type="entry name" value="FERRITIN_1"/>
    <property type="match status" value="1"/>
</dbReference>
<dbReference type="PROSITE" id="PS50905">
    <property type="entry name" value="FERRITIN_LIKE"/>
    <property type="match status" value="1"/>
</dbReference>
<name>FRI2_MAIZE</name>
<proteinExistence type="evidence at protein level"/>
<gene>
    <name type="primary">FER2</name>
</gene>
<organism>
    <name type="scientific">Zea mays</name>
    <name type="common">Maize</name>
    <dbReference type="NCBI Taxonomy" id="4577"/>
    <lineage>
        <taxon>Eukaryota</taxon>
        <taxon>Viridiplantae</taxon>
        <taxon>Streptophyta</taxon>
        <taxon>Embryophyta</taxon>
        <taxon>Tracheophyta</taxon>
        <taxon>Spermatophyta</taxon>
        <taxon>Magnoliopsida</taxon>
        <taxon>Liliopsida</taxon>
        <taxon>Poales</taxon>
        <taxon>Poaceae</taxon>
        <taxon>PACMAD clade</taxon>
        <taxon>Panicoideae</taxon>
        <taxon>Andropogonodae</taxon>
        <taxon>Andropogoneae</taxon>
        <taxon>Tripsacinae</taxon>
        <taxon>Zea</taxon>
    </lineage>
</organism>
<accession>P29390</accession>
<accession>Q43259</accession>
<sequence>MMLRVSSSPAAAVANHLSGGAAATTAPARVTAQRSGVSLSAAAAAGKGKEVLSGVVFQPFEEIKGELALVPQSPDRSLARHKFVDDCEAAINEQINVEYNASYAYHSLFAYFDRDNVALKGFAKFFKESSDEEREHAEKLMEYQNKRGGRVRLQSIVAPLTEFDHPEKGDALYAMELTLALEKLVNEKLHSLHGVATRCNDPQLIDFIESEFLEEQGEAINKVSKYVAQLRRVGNKGHGVWHFDQMLLQEAA</sequence>